<accession>P9WEZ9</accession>
<feature type="chain" id="PRO_0000450422" description="Dehydrogenase acuH">
    <location>
        <begin position="1"/>
        <end position="98"/>
    </location>
</feature>
<proteinExistence type="inferred from homology"/>
<gene>
    <name evidence="3" type="primary">acuH</name>
</gene>
<dbReference type="EC" id="1.-.-.-" evidence="4"/>
<dbReference type="EMBL" id="KV878982">
    <property type="status" value="NOT_ANNOTATED_CDS"/>
    <property type="molecule type" value="Genomic_DNA"/>
</dbReference>
<dbReference type="SMR" id="P9WEZ9"/>
<dbReference type="Proteomes" id="UP000184546">
    <property type="component" value="Unassembled WGS sequence"/>
</dbReference>
<dbReference type="GO" id="GO:0016491">
    <property type="term" value="F:oxidoreductase activity"/>
    <property type="evidence" value="ECO:0007669"/>
    <property type="project" value="UniProtKB-KW"/>
</dbReference>
<protein>
    <recommendedName>
        <fullName evidence="3">Dehydrogenase acuH</fullName>
        <ecNumber evidence="4">1.-.-.-</ecNumber>
    </recommendedName>
    <alternativeName>
        <fullName evidence="3">Aculin biosynthesis cluster protein H</fullName>
    </alternativeName>
</protein>
<keyword id="KW-0560">Oxidoreductase</keyword>
<keyword id="KW-1185">Reference proteome</keyword>
<sequence length="98" mass="11126">MHFRTVNTPARLQFISRFVLQPLRPLLHYKDHTIRTAAEAGLDVAELAVGPAFVVARGYFTLRQADTSSAESRDPTKQQQLWEKTLEWLGMTEEQGAL</sequence>
<organism>
    <name type="scientific">Aspergillus aculeatus (strain ATCC 16872 / CBS 172.66 / WB 5094)</name>
    <dbReference type="NCBI Taxonomy" id="690307"/>
    <lineage>
        <taxon>Eukaryota</taxon>
        <taxon>Fungi</taxon>
        <taxon>Dikarya</taxon>
        <taxon>Ascomycota</taxon>
        <taxon>Pezizomycotina</taxon>
        <taxon>Eurotiomycetes</taxon>
        <taxon>Eurotiomycetidae</taxon>
        <taxon>Eurotiales</taxon>
        <taxon>Aspergillaceae</taxon>
        <taxon>Aspergillus</taxon>
        <taxon>Aspergillus subgen. Circumdati</taxon>
    </lineage>
</organism>
<reference key="1">
    <citation type="journal article" date="2017" name="Genome Biol.">
        <title>Comparative genomics reveals high biological diversity and specific adaptations in the industrially and medically important fungal genus Aspergillus.</title>
        <authorList>
            <person name="de Vries R.P."/>
            <person name="Riley R."/>
            <person name="Wiebenga A."/>
            <person name="Aguilar-Osorio G."/>
            <person name="Amillis S."/>
            <person name="Uchima C.A."/>
            <person name="Anderluh G."/>
            <person name="Asadollahi M."/>
            <person name="Askin M."/>
            <person name="Barry K."/>
            <person name="Battaglia E."/>
            <person name="Bayram O."/>
            <person name="Benocci T."/>
            <person name="Braus-Stromeyer S.A."/>
            <person name="Caldana C."/>
            <person name="Canovas D."/>
            <person name="Cerqueira G.C."/>
            <person name="Chen F."/>
            <person name="Chen W."/>
            <person name="Choi C."/>
            <person name="Clum A."/>
            <person name="Dos Santos R.A."/>
            <person name="Damasio A.R."/>
            <person name="Diallinas G."/>
            <person name="Emri T."/>
            <person name="Fekete E."/>
            <person name="Flipphi M."/>
            <person name="Freyberg S."/>
            <person name="Gallo A."/>
            <person name="Gournas C."/>
            <person name="Habgood R."/>
            <person name="Hainaut M."/>
            <person name="Harispe M.L."/>
            <person name="Henrissat B."/>
            <person name="Hilden K.S."/>
            <person name="Hope R."/>
            <person name="Hossain A."/>
            <person name="Karabika E."/>
            <person name="Karaffa L."/>
            <person name="Karanyi Z."/>
            <person name="Krasevec N."/>
            <person name="Kuo A."/>
            <person name="Kusch H."/>
            <person name="LaButti K."/>
            <person name="Lagendijk E.L."/>
            <person name="Lapidus A."/>
            <person name="Levasseur A."/>
            <person name="Lindquist E."/>
            <person name="Lipzen A."/>
            <person name="Logrieco A.F."/>
            <person name="MacCabe A."/>
            <person name="Maekelae M.R."/>
            <person name="Malavazi I."/>
            <person name="Melin P."/>
            <person name="Meyer V."/>
            <person name="Mielnichuk N."/>
            <person name="Miskei M."/>
            <person name="Molnar A.P."/>
            <person name="Mule G."/>
            <person name="Ngan C.Y."/>
            <person name="Orejas M."/>
            <person name="Orosz E."/>
            <person name="Ouedraogo J.P."/>
            <person name="Overkamp K.M."/>
            <person name="Park H.-S."/>
            <person name="Perrone G."/>
            <person name="Piumi F."/>
            <person name="Punt P.J."/>
            <person name="Ram A.F."/>
            <person name="Ramon A."/>
            <person name="Rauscher S."/>
            <person name="Record E."/>
            <person name="Riano-Pachon D.M."/>
            <person name="Robert V."/>
            <person name="Roehrig J."/>
            <person name="Ruller R."/>
            <person name="Salamov A."/>
            <person name="Salih N.S."/>
            <person name="Samson R.A."/>
            <person name="Sandor E."/>
            <person name="Sanguinetti M."/>
            <person name="Schuetze T."/>
            <person name="Sepcic K."/>
            <person name="Shelest E."/>
            <person name="Sherlock G."/>
            <person name="Sophianopoulou V."/>
            <person name="Squina F.M."/>
            <person name="Sun H."/>
            <person name="Susca A."/>
            <person name="Todd R.B."/>
            <person name="Tsang A."/>
            <person name="Unkles S.E."/>
            <person name="van de Wiele N."/>
            <person name="van Rossen-Uffink D."/>
            <person name="Oliveira J.V."/>
            <person name="Vesth T.C."/>
            <person name="Visser J."/>
            <person name="Yu J.-H."/>
            <person name="Zhou M."/>
            <person name="Andersen M.R."/>
            <person name="Archer D.B."/>
            <person name="Baker S.E."/>
            <person name="Benoit I."/>
            <person name="Brakhage A.A."/>
            <person name="Braus G.H."/>
            <person name="Fischer R."/>
            <person name="Frisvad J.C."/>
            <person name="Goldman G.H."/>
            <person name="Houbraken J."/>
            <person name="Oakley B."/>
            <person name="Pocsi I."/>
            <person name="Scazzocchio C."/>
            <person name="Seiboth B."/>
            <person name="vanKuyk P.A."/>
            <person name="Wortman J."/>
            <person name="Dyer P.S."/>
            <person name="Grigoriev I.V."/>
        </authorList>
    </citation>
    <scope>NUCLEOTIDE SEQUENCE [LARGE SCALE GENOMIC DNA]</scope>
    <source>
        <strain>ATCC 16872 / CBS 172.66 / WB 5094</strain>
    </source>
</reference>
<reference key="2">
    <citation type="journal article" date="2015" name="ChemBioChem">
        <title>Investigation of a 6-MSA Synthase Gene Cluster in Aspergillus aculeatus Reveals 6-MSA-derived Aculinic Acid, Aculins A-B and Epi-Aculin A.</title>
        <authorList>
            <person name="Petersen L.M."/>
            <person name="Holm D.K."/>
            <person name="Gotfredsen C.H."/>
            <person name="Mortensen U.H."/>
            <person name="Larsen T.O."/>
        </authorList>
    </citation>
    <scope>FUNCTION</scope>
    <scope>PATHWAY</scope>
</reference>
<comment type="function">
    <text evidence="1 2 4">Dehydrogenase; part of the gene cluster that mediates the biosynthesis of aculins (PubMed:26374386). The pathway begins with the synthesis of 6-methylsalicylic acid by the polyketide synthase (PKS) acuA via condensation of acetate and malonate units (PubMed:26374386). The 6-methylsalicylic acid decarboxylase acuB then catalyzes the decarboxylation of 6-methylsalicylic acid to yield m-cresol (also known as 3-methylphenol) (Probable). These first reactions occur in the cytosol (By similarity). The intermediate m-cresol is then transported into the endoplasmic reticulum where the cytochrome P450 monooxygenase acuC converts it to m-hydroxybenzyl alcohol, which is further converted to gentisyl alcohol by the cytochrome P450 monooxygenase acuD (Probable). Gentisyl alcohol is further oxidized by the oxidoreductase acuE that probably catalyzes hydroxylation of the aromatic ring (Probable). The aromatic system might then be opened by oxidation through a Baeyer-Villiger type of oxidation, which could be catalyzed by acuF, with the carboxylic acid at C-1 subsequently reduced to an aldehyde by acuG (Probable). Subsequently, a hemiacetal is formed, before the dehydrogenase acuH would reduce the double bond between C-4 and C-6 (Probable). Finally, keto-enol tautomerism results in formation of aculinic acid, which exists as two diastereomers (both R/S configurations at C-1) by non-enzymatic hemiacetal formation (Probable). The carboxypeptidase acuI could be involved in the linking of aculinic acid to an aculene A moiety produced by the aculene biosynthesis cluster and which leads to the production of aculin A (Probable). AcuI may also be involved in the attachment of proline to aculinic acid to form epi-aculins A and B (Probable).</text>
</comment>
<comment type="pathway">
    <text evidence="4">Secondary metabolite biosynthesis.</text>
</comment>
<evidence type="ECO:0000250" key="1">
    <source>
        <dbReference type="UniProtKB" id="A0A075TRC0"/>
    </source>
</evidence>
<evidence type="ECO:0000269" key="2">
    <source>
    </source>
</evidence>
<evidence type="ECO:0000303" key="3">
    <source>
    </source>
</evidence>
<evidence type="ECO:0000305" key="4">
    <source>
    </source>
</evidence>
<name>ACUH_ASPA1</name>